<keyword id="KW-0002">3D-structure</keyword>
<keyword id="KW-0024">Alternative initiation</keyword>
<keyword id="KW-0025">Alternative splicing</keyword>
<keyword id="KW-0090">Biological rhythms</keyword>
<keyword id="KW-0963">Cytoplasm</keyword>
<keyword id="KW-0539">Nucleus</keyword>
<keyword id="KW-0597">Phosphoprotein</keyword>
<keyword id="KW-1185">Reference proteome</keyword>
<keyword id="KW-0677">Repeat</keyword>
<organism>
    <name type="scientific">Drosophila melanogaster</name>
    <name type="common">Fruit fly</name>
    <dbReference type="NCBI Taxonomy" id="7227"/>
    <lineage>
        <taxon>Eukaryota</taxon>
        <taxon>Metazoa</taxon>
        <taxon>Ecdysozoa</taxon>
        <taxon>Arthropoda</taxon>
        <taxon>Hexapoda</taxon>
        <taxon>Insecta</taxon>
        <taxon>Pterygota</taxon>
        <taxon>Neoptera</taxon>
        <taxon>Endopterygota</taxon>
        <taxon>Diptera</taxon>
        <taxon>Brachycera</taxon>
        <taxon>Muscomorpha</taxon>
        <taxon>Ephydroidea</taxon>
        <taxon>Drosophilidae</taxon>
        <taxon>Drosophila</taxon>
        <taxon>Sophophora</taxon>
    </lineage>
</organism>
<protein>
    <recommendedName>
        <fullName>Protein timeless</fullName>
    </recommendedName>
</protein>
<gene>
    <name type="primary">tim</name>
    <name type="ORF">CG3234</name>
</gene>
<accession>P49021</accession>
<accession>A4V040</accession>
<accession>B7Z007</accession>
<accession>B7Z008</accession>
<accession>C9QPB7</accession>
<accession>M9MRE9</accession>
<accession>O44380</accession>
<accession>Q1WWF5</accession>
<accession>Q59E16</accession>
<accession>Q8I037</accession>
<accession>Q95U67</accession>
<accession>Q9VQR6</accession>
<accession>Q9VQR7</accession>
<dbReference type="EMBL" id="U37018">
    <property type="protein sequence ID" value="AAC46920.1"/>
    <property type="status" value="ALT_INIT"/>
    <property type="molecule type" value="mRNA"/>
</dbReference>
<dbReference type="EMBL" id="AF032401">
    <property type="protein sequence ID" value="AAB94890.1"/>
    <property type="molecule type" value="Genomic_DNA"/>
</dbReference>
<dbReference type="EMBL" id="AF032400">
    <property type="protein sequence ID" value="AAB94890.1"/>
    <property type="status" value="JOINED"/>
    <property type="molecule type" value="Genomic_DNA"/>
</dbReference>
<dbReference type="EMBL" id="AE014134">
    <property type="protein sequence ID" value="AAF51098.4"/>
    <property type="molecule type" value="Genomic_DNA"/>
</dbReference>
<dbReference type="EMBL" id="AE014134">
    <property type="protein sequence ID" value="AAN10371.3"/>
    <property type="molecule type" value="Genomic_DNA"/>
</dbReference>
<dbReference type="EMBL" id="AE014134">
    <property type="protein sequence ID" value="AAN10372.3"/>
    <property type="molecule type" value="Genomic_DNA"/>
</dbReference>
<dbReference type="EMBL" id="AE014134">
    <property type="protein sequence ID" value="AAX52649.2"/>
    <property type="molecule type" value="Genomic_DNA"/>
</dbReference>
<dbReference type="EMBL" id="AE014134">
    <property type="protein sequence ID" value="ABC65862.2"/>
    <property type="molecule type" value="Genomic_DNA"/>
</dbReference>
<dbReference type="EMBL" id="AE014134">
    <property type="protein sequence ID" value="ACL82987.2"/>
    <property type="molecule type" value="Genomic_DNA"/>
</dbReference>
<dbReference type="EMBL" id="AE014134">
    <property type="protein sequence ID" value="ACL82988.2"/>
    <property type="molecule type" value="Genomic_DNA"/>
</dbReference>
<dbReference type="EMBL" id="AE014134">
    <property type="protein sequence ID" value="ADV36936.2"/>
    <property type="molecule type" value="Genomic_DNA"/>
</dbReference>
<dbReference type="EMBL" id="Y09930">
    <property type="status" value="NOT_ANNOTATED_CDS"/>
    <property type="molecule type" value="Genomic_DNA"/>
</dbReference>
<dbReference type="EMBL" id="Y09931">
    <property type="status" value="NOT_ANNOTATED_CDS"/>
    <property type="molecule type" value="Genomic_DNA"/>
</dbReference>
<dbReference type="EMBL" id="Y09932">
    <property type="status" value="NOT_ANNOTATED_CDS"/>
    <property type="molecule type" value="Genomic_DNA"/>
</dbReference>
<dbReference type="EMBL" id="Y09933">
    <property type="status" value="NOT_ANNOTATED_CDS"/>
    <property type="molecule type" value="Genomic_DNA"/>
</dbReference>
<dbReference type="EMBL" id="Y09934">
    <property type="status" value="NOT_ANNOTATED_CDS"/>
    <property type="molecule type" value="Genomic_DNA"/>
</dbReference>
<dbReference type="EMBL" id="Y09935">
    <property type="status" value="NOT_ANNOTATED_CDS"/>
    <property type="molecule type" value="Genomic_DNA"/>
</dbReference>
<dbReference type="EMBL" id="AY058278">
    <property type="protein sequence ID" value="AAL13507.1"/>
    <property type="status" value="ALT_INIT"/>
    <property type="molecule type" value="mRNA"/>
</dbReference>
<dbReference type="EMBL" id="BT001424">
    <property type="protein sequence ID" value="AAN71179.1"/>
    <property type="status" value="ALT_SEQ"/>
    <property type="molecule type" value="mRNA"/>
</dbReference>
<dbReference type="EMBL" id="BT024951">
    <property type="protein sequence ID" value="ABE01181.1"/>
    <property type="molecule type" value="mRNA"/>
</dbReference>
<dbReference type="EMBL" id="BT099999">
    <property type="protein sequence ID" value="ACX54883.1"/>
    <property type="status" value="ALT_INIT"/>
    <property type="molecule type" value="mRNA"/>
</dbReference>
<dbReference type="EMBL" id="AF038501">
    <property type="protein sequence ID" value="AAB94929.1"/>
    <property type="molecule type" value="Genomic_DNA"/>
</dbReference>
<dbReference type="PIR" id="A57655">
    <property type="entry name" value="A57655"/>
</dbReference>
<dbReference type="RefSeq" id="NP_001014463.2">
    <molecule id="P49021-6"/>
    <property type="nucleotide sequence ID" value="NM_001014463.4"/>
</dbReference>
<dbReference type="RefSeq" id="NP_001033872.2">
    <molecule id="P49021-7"/>
    <property type="nucleotide sequence ID" value="NM_001038783.3"/>
</dbReference>
<dbReference type="RefSeq" id="NP_001137780.2">
    <molecule id="P49021-2"/>
    <property type="nucleotide sequence ID" value="NM_001144308.3"/>
</dbReference>
<dbReference type="RefSeq" id="NP_001137781.2">
    <molecule id="P49021-3"/>
    <property type="nucleotide sequence ID" value="NM_001144309.4"/>
</dbReference>
<dbReference type="RefSeq" id="NP_001188686.2">
    <molecule id="P49021-5"/>
    <property type="nucleotide sequence ID" value="NM_001201757.2"/>
</dbReference>
<dbReference type="RefSeq" id="NP_722912.3">
    <molecule id="P49021-4"/>
    <property type="nucleotide sequence ID" value="NM_164540.4"/>
</dbReference>
<dbReference type="RefSeq" id="NP_722913.3">
    <molecule id="P49021-8"/>
    <property type="nucleotide sequence ID" value="NM_164541.6"/>
</dbReference>
<dbReference type="RefSeq" id="NP_722914.3">
    <molecule id="P49021-4"/>
    <property type="nucleotide sequence ID" value="NM_164542.5"/>
</dbReference>
<dbReference type="PDB" id="8DD7">
    <property type="method" value="EM"/>
    <property type="resolution" value="3.30 A"/>
    <property type="chains" value="B=1-1398"/>
</dbReference>
<dbReference type="PDBsum" id="8DD7"/>
<dbReference type="SMR" id="P49021"/>
<dbReference type="BioGRID" id="59781">
    <property type="interactions" value="30"/>
</dbReference>
<dbReference type="DIP" id="DIP-29425N"/>
<dbReference type="FunCoup" id="P49021">
    <property type="interactions" value="29"/>
</dbReference>
<dbReference type="IntAct" id="P49021">
    <property type="interactions" value="8"/>
</dbReference>
<dbReference type="STRING" id="7227.FBpp0401565"/>
<dbReference type="GlyGen" id="P49021">
    <property type="glycosylation" value="1 site"/>
</dbReference>
<dbReference type="PaxDb" id="7227-FBpp0305454"/>
<dbReference type="DNASU" id="33571"/>
<dbReference type="EnsemblMetazoa" id="FBtr0077567">
    <molecule id="P49021-4"/>
    <property type="protein sequence ID" value="FBpp0077256"/>
    <property type="gene ID" value="FBgn0014396"/>
</dbReference>
<dbReference type="EnsemblMetazoa" id="FBtr0333252">
    <molecule id="P49021-8"/>
    <property type="protein sequence ID" value="FBpp0305450"/>
    <property type="gene ID" value="FBgn0014396"/>
</dbReference>
<dbReference type="EnsemblMetazoa" id="FBtr0333253">
    <molecule id="P49021-7"/>
    <property type="protein sequence ID" value="FBpp0305451"/>
    <property type="gene ID" value="FBgn0014396"/>
</dbReference>
<dbReference type="EnsemblMetazoa" id="FBtr0333254">
    <molecule id="P49021-5"/>
    <property type="protein sequence ID" value="FBpp0305452"/>
    <property type="gene ID" value="FBgn0014396"/>
</dbReference>
<dbReference type="EnsemblMetazoa" id="FBtr0333255">
    <molecule id="P49021-3"/>
    <property type="protein sequence ID" value="FBpp0305453"/>
    <property type="gene ID" value="FBgn0014396"/>
</dbReference>
<dbReference type="EnsemblMetazoa" id="FBtr0333256">
    <molecule id="P49021-4"/>
    <property type="protein sequence ID" value="FBpp0305454"/>
    <property type="gene ID" value="FBgn0014396"/>
</dbReference>
<dbReference type="EnsemblMetazoa" id="FBtr0333258">
    <molecule id="P49021-2"/>
    <property type="protein sequence ID" value="FBpp0305456"/>
    <property type="gene ID" value="FBgn0014396"/>
</dbReference>
<dbReference type="EnsemblMetazoa" id="FBtr0333259">
    <molecule id="P49021-6"/>
    <property type="protein sequence ID" value="FBpp0305457"/>
    <property type="gene ID" value="FBgn0014396"/>
</dbReference>
<dbReference type="GeneID" id="33571"/>
<dbReference type="KEGG" id="dme:Dmel_CG3234"/>
<dbReference type="UCSC" id="CG3234-RA">
    <molecule id="P49021-4"/>
    <property type="organism name" value="d. melanogaster"/>
</dbReference>
<dbReference type="UCSC" id="CG3234-RE">
    <property type="organism name" value="d. melanogaster"/>
</dbReference>
<dbReference type="AGR" id="FB:FBgn0014396"/>
<dbReference type="CTD" id="107698"/>
<dbReference type="FlyBase" id="FBgn0014396">
    <property type="gene designation" value="tim"/>
</dbReference>
<dbReference type="VEuPathDB" id="VectorBase:FBgn0014396"/>
<dbReference type="eggNOG" id="KOG1974">
    <property type="taxonomic scope" value="Eukaryota"/>
</dbReference>
<dbReference type="GeneTree" id="ENSGT00390000015124"/>
<dbReference type="InParanoid" id="P49021"/>
<dbReference type="OMA" id="SKCNQRS"/>
<dbReference type="OrthoDB" id="6429365at2759"/>
<dbReference type="PhylomeDB" id="P49021"/>
<dbReference type="Reactome" id="R-DME-432395">
    <property type="pathway name" value="Degradation of TIM"/>
</dbReference>
<dbReference type="Reactome" id="R-DME-432490">
    <property type="pathway name" value="Nuclear import of PER and TIM"/>
</dbReference>
<dbReference type="Reactome" id="R-DME-432501">
    <property type="pathway name" value="Transcription repression by PER and activation by PDP1"/>
</dbReference>
<dbReference type="Reactome" id="R-DME-432553">
    <property type="pathway name" value="Phosphorylation of PER and TIM"/>
</dbReference>
<dbReference type="Reactome" id="R-DME-432620">
    <property type="pathway name" value="Dephosphorylation of PER"/>
</dbReference>
<dbReference type="Reactome" id="R-DME-538898">
    <property type="pathway name" value="Dephosphorylation of TIM"/>
</dbReference>
<dbReference type="SignaLink" id="P49021"/>
<dbReference type="BioGRID-ORCS" id="33571">
    <property type="hits" value="0 hits in 1 CRISPR screen"/>
</dbReference>
<dbReference type="ChiTaRS" id="tim">
    <property type="organism name" value="fly"/>
</dbReference>
<dbReference type="GenomeRNAi" id="33571"/>
<dbReference type="PRO" id="PR:P49021"/>
<dbReference type="Proteomes" id="UP000000803">
    <property type="component" value="Chromosome 2L"/>
</dbReference>
<dbReference type="Bgee" id="FBgn0014396">
    <property type="expression patterns" value="Expressed in photoreceptor cell R7 (Drosophila) in insect head and 224 other cell types or tissues"/>
</dbReference>
<dbReference type="ExpressionAtlas" id="P49021">
    <property type="expression patterns" value="baseline and differential"/>
</dbReference>
<dbReference type="GO" id="GO:0005737">
    <property type="term" value="C:cytoplasm"/>
    <property type="evidence" value="ECO:0000314"/>
    <property type="project" value="FlyBase"/>
</dbReference>
<dbReference type="GO" id="GO:0005829">
    <property type="term" value="C:cytosol"/>
    <property type="evidence" value="ECO:0000314"/>
    <property type="project" value="FlyBase"/>
</dbReference>
<dbReference type="GO" id="GO:0005654">
    <property type="term" value="C:nucleoplasm"/>
    <property type="evidence" value="ECO:0000304"/>
    <property type="project" value="Reactome"/>
</dbReference>
<dbReference type="GO" id="GO:0005634">
    <property type="term" value="C:nucleus"/>
    <property type="evidence" value="ECO:0000314"/>
    <property type="project" value="FlyBase"/>
</dbReference>
<dbReference type="GO" id="GO:0048471">
    <property type="term" value="C:perinuclear region of cytoplasm"/>
    <property type="evidence" value="ECO:0007669"/>
    <property type="project" value="UniProtKB-SubCell"/>
</dbReference>
<dbReference type="GO" id="GO:0031298">
    <property type="term" value="C:replication fork protection complex"/>
    <property type="evidence" value="ECO:0000318"/>
    <property type="project" value="GO_Central"/>
</dbReference>
<dbReference type="GO" id="GO:0003677">
    <property type="term" value="F:DNA binding"/>
    <property type="evidence" value="ECO:0000318"/>
    <property type="project" value="GO_Central"/>
</dbReference>
<dbReference type="GO" id="GO:0071482">
    <property type="term" value="P:cellular response to light stimulus"/>
    <property type="evidence" value="ECO:0000315"/>
    <property type="project" value="FlyBase"/>
</dbReference>
<dbReference type="GO" id="GO:0048512">
    <property type="term" value="P:circadian behavior"/>
    <property type="evidence" value="ECO:0000315"/>
    <property type="project" value="FlyBase"/>
</dbReference>
<dbReference type="GO" id="GO:0003053">
    <property type="term" value="P:circadian regulation of heart rate"/>
    <property type="evidence" value="ECO:0000315"/>
    <property type="project" value="FlyBase"/>
</dbReference>
<dbReference type="GO" id="GO:0060086">
    <property type="term" value="P:circadian temperature homeostasis"/>
    <property type="evidence" value="ECO:0000315"/>
    <property type="project" value="FlyBase"/>
</dbReference>
<dbReference type="GO" id="GO:0007620">
    <property type="term" value="P:copulation"/>
    <property type="evidence" value="ECO:0000315"/>
    <property type="project" value="FlyBase"/>
</dbReference>
<dbReference type="GO" id="GO:0006281">
    <property type="term" value="P:DNA repair"/>
    <property type="evidence" value="ECO:0000318"/>
    <property type="project" value="GO_Central"/>
</dbReference>
<dbReference type="GO" id="GO:0000076">
    <property type="term" value="P:DNA replication checkpoint signaling"/>
    <property type="evidence" value="ECO:0000318"/>
    <property type="project" value="GO_Central"/>
</dbReference>
<dbReference type="GO" id="GO:0008062">
    <property type="term" value="P:eclosion rhythm"/>
    <property type="evidence" value="ECO:0000304"/>
    <property type="project" value="FlyBase"/>
</dbReference>
<dbReference type="GO" id="GO:0009649">
    <property type="term" value="P:entrainment of circadian clock"/>
    <property type="evidence" value="ECO:0000315"/>
    <property type="project" value="FlyBase"/>
</dbReference>
<dbReference type="GO" id="GO:0045475">
    <property type="term" value="P:locomotor rhythm"/>
    <property type="evidence" value="ECO:0000315"/>
    <property type="project" value="FlyBase"/>
</dbReference>
<dbReference type="GO" id="GO:0007617">
    <property type="term" value="P:mating behavior"/>
    <property type="evidence" value="ECO:0000315"/>
    <property type="project" value="FlyBase"/>
</dbReference>
<dbReference type="GO" id="GO:0046957">
    <property type="term" value="P:negative phototaxis"/>
    <property type="evidence" value="ECO:0000315"/>
    <property type="project" value="FlyBase"/>
</dbReference>
<dbReference type="GO" id="GO:0009648">
    <property type="term" value="P:photoperiodism"/>
    <property type="evidence" value="ECO:0000315"/>
    <property type="project" value="FlyBase"/>
</dbReference>
<dbReference type="GO" id="GO:0050766">
    <property type="term" value="P:positive regulation of phagocytosis"/>
    <property type="evidence" value="ECO:0000315"/>
    <property type="project" value="CACAO"/>
</dbReference>
<dbReference type="GO" id="GO:0042749">
    <property type="term" value="P:regulation of circadian sleep/wake cycle"/>
    <property type="evidence" value="ECO:0000315"/>
    <property type="project" value="FlyBase"/>
</dbReference>
<dbReference type="GO" id="GO:0045187">
    <property type="term" value="P:regulation of circadian sleep/wake cycle, sleep"/>
    <property type="evidence" value="ECO:0000315"/>
    <property type="project" value="FlyBase"/>
</dbReference>
<dbReference type="GO" id="GO:0050764">
    <property type="term" value="P:regulation of phagocytosis"/>
    <property type="evidence" value="ECO:0000315"/>
    <property type="project" value="CACAO"/>
</dbReference>
<dbReference type="GO" id="GO:0042306">
    <property type="term" value="P:regulation of protein import into nucleus"/>
    <property type="evidence" value="ECO:0000304"/>
    <property type="project" value="FlyBase"/>
</dbReference>
<dbReference type="GO" id="GO:0043111">
    <property type="term" value="P:replication fork arrest"/>
    <property type="evidence" value="ECO:0000318"/>
    <property type="project" value="GO_Central"/>
</dbReference>
<dbReference type="GO" id="GO:0007622">
    <property type="term" value="P:rhythmic behavior"/>
    <property type="evidence" value="ECO:0000304"/>
    <property type="project" value="FlyBase"/>
</dbReference>
<dbReference type="InterPro" id="IPR044998">
    <property type="entry name" value="Timeless"/>
</dbReference>
<dbReference type="InterPro" id="IPR007725">
    <property type="entry name" value="TIMELESS_C"/>
</dbReference>
<dbReference type="InterPro" id="IPR006906">
    <property type="entry name" value="Timeless_N"/>
</dbReference>
<dbReference type="PANTHER" id="PTHR22940:SF5">
    <property type="entry name" value="PROTEIN TIMELESS"/>
    <property type="match status" value="1"/>
</dbReference>
<dbReference type="PANTHER" id="PTHR22940">
    <property type="entry name" value="TIMEOUT/TIMELESS-2"/>
    <property type="match status" value="1"/>
</dbReference>
<dbReference type="Pfam" id="PF04821">
    <property type="entry name" value="TIMELESS"/>
    <property type="match status" value="1"/>
</dbReference>
<dbReference type="Pfam" id="PF05029">
    <property type="entry name" value="TIMELESS_C"/>
    <property type="match status" value="1"/>
</dbReference>
<feature type="chain" id="PRO_0000022532" description="Protein timeless">
    <location>
        <begin position="1"/>
        <end position="1398"/>
    </location>
</feature>
<feature type="region of interest" description="Necessary for normal circadian rhythm">
    <location>
        <begin position="237"/>
        <end position="268"/>
    </location>
</feature>
<feature type="region of interest" description="Disordered" evidence="2">
    <location>
        <begin position="254"/>
        <end position="300"/>
    </location>
</feature>
<feature type="region of interest" description="Disordered" evidence="2">
    <location>
        <begin position="322"/>
        <end position="452"/>
    </location>
</feature>
<feature type="region of interest" description="Disordered" evidence="2">
    <location>
        <begin position="478"/>
        <end position="555"/>
    </location>
</feature>
<feature type="region of interest" description="Disordered" evidence="2">
    <location>
        <begin position="1127"/>
        <end position="1147"/>
    </location>
</feature>
<feature type="region of interest" description="Disordered" evidence="2">
    <location>
        <begin position="1220"/>
        <end position="1239"/>
    </location>
</feature>
<feature type="short sequence motif" description="Nuclear localization signal" evidence="1">
    <location>
        <begin position="550"/>
        <end position="560"/>
    </location>
</feature>
<feature type="compositionally biased region" description="Low complexity" evidence="2">
    <location>
        <begin position="273"/>
        <end position="290"/>
    </location>
</feature>
<feature type="compositionally biased region" description="Gly residues" evidence="2">
    <location>
        <begin position="291"/>
        <end position="300"/>
    </location>
</feature>
<feature type="compositionally biased region" description="Polar residues" evidence="2">
    <location>
        <begin position="338"/>
        <end position="355"/>
    </location>
</feature>
<feature type="compositionally biased region" description="Basic and acidic residues" evidence="2">
    <location>
        <begin position="365"/>
        <end position="375"/>
    </location>
</feature>
<feature type="compositionally biased region" description="Acidic residues" evidence="2">
    <location>
        <begin position="376"/>
        <end position="390"/>
    </location>
</feature>
<feature type="compositionally biased region" description="Polar residues" evidence="2">
    <location>
        <begin position="400"/>
        <end position="421"/>
    </location>
</feature>
<feature type="compositionally biased region" description="Polar residues" evidence="2">
    <location>
        <begin position="440"/>
        <end position="452"/>
    </location>
</feature>
<feature type="compositionally biased region" description="Polar residues" evidence="2">
    <location>
        <begin position="504"/>
        <end position="515"/>
    </location>
</feature>
<feature type="compositionally biased region" description="Low complexity" evidence="2">
    <location>
        <begin position="522"/>
        <end position="531"/>
    </location>
</feature>
<feature type="splice variant" id="VSP_004457" description="In isoform R and isoform S." evidence="9">
    <location>
        <begin position="237"/>
        <end position="268"/>
    </location>
</feature>
<feature type="splice variant" id="VSP_054859" description="In isoform L and isoform N." evidence="10">
    <location>
        <position position="613"/>
    </location>
</feature>
<feature type="splice variant" id="VSP_007693" description="In isoform N and isoform O." evidence="8 10">
    <original>C</original>
    <variation>W</variation>
    <location>
        <position position="891"/>
    </location>
</feature>
<feature type="splice variant" id="VSP_007694" description="In isoform N and isoform O." evidence="8 10">
    <location>
        <begin position="892"/>
        <end position="1398"/>
    </location>
</feature>
<feature type="splice variant" id="VSP_054860" description="In isoform S and isoform M." evidence="11">
    <original>LNLKFDASELEDATASSP</original>
    <variation>RELKSTTEKNNPFVIPQR</variation>
    <location>
        <begin position="1114"/>
        <end position="1131"/>
    </location>
</feature>
<feature type="splice variant" id="VSP_054861" description="In isoform S and isoform M." evidence="11">
    <location>
        <begin position="1132"/>
        <end position="1398"/>
    </location>
</feature>
<feature type="sequence conflict" description="In Ref. 2; AAB94890." evidence="11" ref="2">
    <original>I</original>
    <variation>V</variation>
    <location>
        <position position="1233"/>
    </location>
</feature>
<feature type="helix" evidence="13">
    <location>
        <begin position="4"/>
        <end position="6"/>
    </location>
</feature>
<feature type="helix" evidence="13">
    <location>
        <begin position="7"/>
        <end position="17"/>
    </location>
</feature>
<feature type="strand" evidence="13">
    <location>
        <begin position="18"/>
        <end position="21"/>
    </location>
</feature>
<feature type="strand" evidence="13">
    <location>
        <begin position="24"/>
        <end position="27"/>
    </location>
</feature>
<feature type="helix" evidence="13">
    <location>
        <begin position="31"/>
        <end position="43"/>
    </location>
</feature>
<feature type="turn" evidence="13">
    <location>
        <begin position="47"/>
        <end position="49"/>
    </location>
</feature>
<feature type="helix" evidence="13">
    <location>
        <begin position="51"/>
        <end position="59"/>
    </location>
</feature>
<feature type="helix" evidence="13">
    <location>
        <begin position="61"/>
        <end position="72"/>
    </location>
</feature>
<feature type="helix" evidence="13">
    <location>
        <begin position="76"/>
        <end position="89"/>
    </location>
</feature>
<feature type="helix" evidence="13">
    <location>
        <begin position="93"/>
        <end position="95"/>
    </location>
</feature>
<feature type="helix" evidence="13">
    <location>
        <begin position="99"/>
        <end position="102"/>
    </location>
</feature>
<feature type="strand" evidence="13">
    <location>
        <begin position="103"/>
        <end position="105"/>
    </location>
</feature>
<feature type="helix" evidence="13">
    <location>
        <begin position="106"/>
        <end position="126"/>
    </location>
</feature>
<feature type="helix" evidence="13">
    <location>
        <begin position="129"/>
        <end position="143"/>
    </location>
</feature>
<feature type="helix" evidence="13">
    <location>
        <begin position="151"/>
        <end position="169"/>
    </location>
</feature>
<feature type="helix" evidence="13">
    <location>
        <begin position="172"/>
        <end position="176"/>
    </location>
</feature>
<feature type="turn" evidence="13">
    <location>
        <begin position="182"/>
        <end position="184"/>
    </location>
</feature>
<feature type="helix" evidence="13">
    <location>
        <begin position="185"/>
        <end position="201"/>
    </location>
</feature>
<feature type="helix" evidence="13">
    <location>
        <begin position="204"/>
        <end position="213"/>
    </location>
</feature>
<feature type="helix" evidence="13">
    <location>
        <begin position="217"/>
        <end position="219"/>
    </location>
</feature>
<feature type="helix" evidence="13">
    <location>
        <begin position="221"/>
        <end position="231"/>
    </location>
</feature>
<feature type="helix" evidence="13">
    <location>
        <begin position="237"/>
        <end position="247"/>
    </location>
</feature>
<feature type="strand" evidence="13">
    <location>
        <begin position="287"/>
        <end position="291"/>
    </location>
</feature>
<feature type="helix" evidence="13">
    <location>
        <begin position="546"/>
        <end position="570"/>
    </location>
</feature>
<feature type="strand" evidence="13">
    <location>
        <begin position="572"/>
        <end position="574"/>
    </location>
</feature>
<feature type="helix" evidence="13">
    <location>
        <begin position="578"/>
        <end position="608"/>
    </location>
</feature>
<feature type="helix" evidence="13">
    <location>
        <begin position="618"/>
        <end position="634"/>
    </location>
</feature>
<feature type="helix" evidence="13">
    <location>
        <begin position="639"/>
        <end position="641"/>
    </location>
</feature>
<feature type="turn" evidence="13">
    <location>
        <begin position="642"/>
        <end position="645"/>
    </location>
</feature>
<feature type="helix" evidence="13">
    <location>
        <begin position="648"/>
        <end position="668"/>
    </location>
</feature>
<feature type="strand" evidence="13">
    <location>
        <begin position="671"/>
        <end position="674"/>
    </location>
</feature>
<feature type="helix" evidence="13">
    <location>
        <begin position="677"/>
        <end position="702"/>
    </location>
</feature>
<feature type="helix" evidence="13">
    <location>
        <begin position="708"/>
        <end position="722"/>
    </location>
</feature>
<feature type="turn" evidence="13">
    <location>
        <begin position="726"/>
        <end position="729"/>
    </location>
</feature>
<feature type="helix" evidence="13">
    <location>
        <begin position="730"/>
        <end position="736"/>
    </location>
</feature>
<feature type="turn" evidence="13">
    <location>
        <begin position="740"/>
        <end position="742"/>
    </location>
</feature>
<feature type="helix" evidence="13">
    <location>
        <begin position="745"/>
        <end position="765"/>
    </location>
</feature>
<feature type="turn" evidence="13">
    <location>
        <begin position="766"/>
        <end position="770"/>
    </location>
</feature>
<feature type="helix" evidence="13">
    <location>
        <begin position="776"/>
        <end position="779"/>
    </location>
</feature>
<feature type="helix" evidence="13">
    <location>
        <begin position="787"/>
        <end position="797"/>
    </location>
</feature>
<feature type="helix" evidence="13">
    <location>
        <begin position="799"/>
        <end position="802"/>
    </location>
</feature>
<feature type="turn" evidence="13">
    <location>
        <begin position="803"/>
        <end position="805"/>
    </location>
</feature>
<feature type="helix" evidence="13">
    <location>
        <begin position="807"/>
        <end position="818"/>
    </location>
</feature>
<feature type="strand" evidence="13">
    <location>
        <begin position="820"/>
        <end position="822"/>
    </location>
</feature>
<feature type="helix" evidence="13">
    <location>
        <begin position="830"/>
        <end position="842"/>
    </location>
</feature>
<feature type="turn" evidence="13">
    <location>
        <begin position="848"/>
        <end position="850"/>
    </location>
</feature>
<feature type="helix" evidence="13">
    <location>
        <begin position="851"/>
        <end position="854"/>
    </location>
</feature>
<feature type="turn" evidence="13">
    <location>
        <begin position="855"/>
        <end position="858"/>
    </location>
</feature>
<feature type="helix" evidence="13">
    <location>
        <begin position="859"/>
        <end position="862"/>
    </location>
</feature>
<feature type="strand" evidence="13">
    <location>
        <begin position="988"/>
        <end position="990"/>
    </location>
</feature>
<feature type="helix" evidence="13">
    <location>
        <begin position="991"/>
        <end position="1001"/>
    </location>
</feature>
<feature type="helix" evidence="13">
    <location>
        <begin position="1006"/>
        <end position="1017"/>
    </location>
</feature>
<feature type="helix" evidence="13">
    <location>
        <begin position="1020"/>
        <end position="1027"/>
    </location>
</feature>
<feature type="helix" evidence="13">
    <location>
        <begin position="1040"/>
        <end position="1046"/>
    </location>
</feature>
<feature type="turn" evidence="13">
    <location>
        <begin position="1047"/>
        <end position="1049"/>
    </location>
</feature>
<feature type="helix" evidence="13">
    <location>
        <begin position="1059"/>
        <end position="1062"/>
    </location>
</feature>
<feature type="helix" evidence="13">
    <location>
        <begin position="1063"/>
        <end position="1066"/>
    </location>
</feature>
<feature type="helix" evidence="13">
    <location>
        <begin position="1068"/>
        <end position="1076"/>
    </location>
</feature>
<feature type="turn" evidence="13">
    <location>
        <begin position="1082"/>
        <end position="1086"/>
    </location>
</feature>
<feature type="strand" evidence="13">
    <location>
        <begin position="1087"/>
        <end position="1090"/>
    </location>
</feature>
<feature type="helix" evidence="13">
    <location>
        <begin position="1103"/>
        <end position="1107"/>
    </location>
</feature>
<feature type="turn" evidence="13">
    <location>
        <begin position="1121"/>
        <end position="1125"/>
    </location>
</feature>
<feature type="strand" evidence="13">
    <location>
        <begin position="1126"/>
        <end position="1130"/>
    </location>
</feature>
<feature type="helix" evidence="13">
    <location>
        <begin position="1210"/>
        <end position="1218"/>
    </location>
</feature>
<name>TIM_DROME</name>
<sequence length="1398" mass="156382">MDWLLATPQLYSAFSSLGCLEGDTYVVNPNALAILEEINYKLTYEDQTLRTFRRAIGFGQNVRSDLIPLLENAKDDAVLESVIRILVNLTVPVECLFSVDVMYRTDVGRHTIFELNKLLYTSKEAFTEARSTKSVVEYMKHILESDPKLSPHKCDQINNCLLLLRNILHIPETHAHCVMPMMQSMPHGISMQNTILWNLFIQSIDKLLLYLMTCPQRAFWGVTMVQLIALIYKDQHVSTLQKLLSLWFEASLSESSEDNESNTSPPKQGSGDSSPMLTSDPTSDSSDNGSNGRGMGGGMREGTAATLQEVSRKGQEYQNAMARVPADKPDGSEEASDMTGNDSEQPGSPEQSQPAGESMDDGDYEDQRHRQLNEHGEEDEDEDEVEEEEYLQLGPASEPLNLTQQPADKVNNTTNPTSSAPQGCLGNEPFKPPPPLPVRASTSAHAQMQKFNESSYASHVSAVKLGQKSPHAGQLQLTKGKCCPQKRECPSSQSELSDCGYGTQVENQESISTSSNDDDGPQGKPQHQKPPCNTKPRNKPRTIMSPMDKKELRRKKLVKRSKSSLINMKGLVQHTPTDDDISNLLKEFTVDFLLKGYSYLVEELHMQLLSNAKVPIDTSHFFWLVTYFLKFAAQLELDMEHIDTILTYDVLSYLTYEGVSLCEQLELNARQEGSDLKPYLRRMHLVVTAIREFLQAIDTYNKVTHLNEDDKAHLRQLQLQISEMSDLRCLFVLLLRRFNPSIHSKQYLQDLVVTNHILLLILDSSAKLGGCQTIRLSEHITQFATLEVMHYYGILLEDFNNNGEFVNDCIFTMMHHIGGDLGQIGVLFQPIILKTYSRIWEADYELCDDWSDLIEYVIHKFMNTPPKSPLTIPTTSLTEMTKEHNQEHTVCSWSQEEMDTLYWYYVQSKKNNDIVGKIVKLFSNNGNKLKTRISIIQQLLQQDIITLLEYDDLMKFEDAEYQRTLLTTPTSATTESGIEIKECAYGKPSDDVQILLDLIIKENKAQHLLWLQRILIECCFVKLTLRSGLKVPEGDHIMEPVAYHCICKQKSIPVVQWNNEQSTTMLYQPFVLLLHKLGIQLPADAGSIFARIPDYWTPETMYGLAKKLGPLDKLNLKFDASELEDATASSPSRYHHTGPRNSLSSVSSLDVDLGDTEELALIPEVDAAVEKAHAMASTPSPSEIFAVPKTKHCNSIIRYTPDPTPPVPNWLQLVMRSKCNHRTGPSGDPSDCIGSSSTTVDDEGFGKSISAATSQAASTSMSTVNPTTTLSLNMLNTFMGSHNENSSSSGCGGTVSSLSMVALMSTGAAGGGGNTSGLEMDVDASMKSSFERLEVNGSHFSRANNLDQEYSAMVASVYEKEKELNSDNVSLASDLTRMYVSDEDDRLERTEIRVPHYH</sequence>
<reference key="1">
    <citation type="journal article" date="1995" name="Science">
        <title>Positional cloning and sequence analysis of the Drosophila clock gene, timeless.</title>
        <authorList>
            <person name="Myers M.P."/>
            <person name="Wager-Smith K."/>
            <person name="Wesley C.S."/>
            <person name="Young M.W."/>
            <person name="Sehgal A."/>
        </authorList>
    </citation>
    <scope>NUCLEOTIDE SEQUENCE [MRNA] (ISOFORM R)</scope>
</reference>
<reference key="2">
    <citation type="journal article" date="1997" name="Nucleic Acids Res.">
        <title>Comparison of chromosomal DNA composing timeless in Drosophila melanogaster and D. virilis suggests a new conserved structure for the TIMELESS protein.</title>
        <authorList>
            <person name="Myers M.P."/>
            <person name="Rothenfluh A."/>
            <person name="Chang M."/>
            <person name="Young M.W."/>
        </authorList>
    </citation>
    <scope>NUCLEOTIDE SEQUENCE [GENOMIC DNA]</scope>
</reference>
<reference key="3">
    <citation type="journal article" date="2000" name="Science">
        <title>The genome sequence of Drosophila melanogaster.</title>
        <authorList>
            <person name="Adams M.D."/>
            <person name="Celniker S.E."/>
            <person name="Holt R.A."/>
            <person name="Evans C.A."/>
            <person name="Gocayne J.D."/>
            <person name="Amanatides P.G."/>
            <person name="Scherer S.E."/>
            <person name="Li P.W."/>
            <person name="Hoskins R.A."/>
            <person name="Galle R.F."/>
            <person name="George R.A."/>
            <person name="Lewis S.E."/>
            <person name="Richards S."/>
            <person name="Ashburner M."/>
            <person name="Henderson S.N."/>
            <person name="Sutton G.G."/>
            <person name="Wortman J.R."/>
            <person name="Yandell M.D."/>
            <person name="Zhang Q."/>
            <person name="Chen L.X."/>
            <person name="Brandon R.C."/>
            <person name="Rogers Y.-H.C."/>
            <person name="Blazej R.G."/>
            <person name="Champe M."/>
            <person name="Pfeiffer B.D."/>
            <person name="Wan K.H."/>
            <person name="Doyle C."/>
            <person name="Baxter E.G."/>
            <person name="Helt G."/>
            <person name="Nelson C.R."/>
            <person name="Miklos G.L.G."/>
            <person name="Abril J.F."/>
            <person name="Agbayani A."/>
            <person name="An H.-J."/>
            <person name="Andrews-Pfannkoch C."/>
            <person name="Baldwin D."/>
            <person name="Ballew R.M."/>
            <person name="Basu A."/>
            <person name="Baxendale J."/>
            <person name="Bayraktaroglu L."/>
            <person name="Beasley E.M."/>
            <person name="Beeson K.Y."/>
            <person name="Benos P.V."/>
            <person name="Berman B.P."/>
            <person name="Bhandari D."/>
            <person name="Bolshakov S."/>
            <person name="Borkova D."/>
            <person name="Botchan M.R."/>
            <person name="Bouck J."/>
            <person name="Brokstein P."/>
            <person name="Brottier P."/>
            <person name="Burtis K.C."/>
            <person name="Busam D.A."/>
            <person name="Butler H."/>
            <person name="Cadieu E."/>
            <person name="Center A."/>
            <person name="Chandra I."/>
            <person name="Cherry J.M."/>
            <person name="Cawley S."/>
            <person name="Dahlke C."/>
            <person name="Davenport L.B."/>
            <person name="Davies P."/>
            <person name="de Pablos B."/>
            <person name="Delcher A."/>
            <person name="Deng Z."/>
            <person name="Mays A.D."/>
            <person name="Dew I."/>
            <person name="Dietz S.M."/>
            <person name="Dodson K."/>
            <person name="Doup L.E."/>
            <person name="Downes M."/>
            <person name="Dugan-Rocha S."/>
            <person name="Dunkov B.C."/>
            <person name="Dunn P."/>
            <person name="Durbin K.J."/>
            <person name="Evangelista C.C."/>
            <person name="Ferraz C."/>
            <person name="Ferriera S."/>
            <person name="Fleischmann W."/>
            <person name="Fosler C."/>
            <person name="Gabrielian A.E."/>
            <person name="Garg N.S."/>
            <person name="Gelbart W.M."/>
            <person name="Glasser K."/>
            <person name="Glodek A."/>
            <person name="Gong F."/>
            <person name="Gorrell J.H."/>
            <person name="Gu Z."/>
            <person name="Guan P."/>
            <person name="Harris M."/>
            <person name="Harris N.L."/>
            <person name="Harvey D.A."/>
            <person name="Heiman T.J."/>
            <person name="Hernandez J.R."/>
            <person name="Houck J."/>
            <person name="Hostin D."/>
            <person name="Houston K.A."/>
            <person name="Howland T.J."/>
            <person name="Wei M.-H."/>
            <person name="Ibegwam C."/>
            <person name="Jalali M."/>
            <person name="Kalush F."/>
            <person name="Karpen G.H."/>
            <person name="Ke Z."/>
            <person name="Kennison J.A."/>
            <person name="Ketchum K.A."/>
            <person name="Kimmel B.E."/>
            <person name="Kodira C.D."/>
            <person name="Kraft C.L."/>
            <person name="Kravitz S."/>
            <person name="Kulp D."/>
            <person name="Lai Z."/>
            <person name="Lasko P."/>
            <person name="Lei Y."/>
            <person name="Levitsky A.A."/>
            <person name="Li J.H."/>
            <person name="Li Z."/>
            <person name="Liang Y."/>
            <person name="Lin X."/>
            <person name="Liu X."/>
            <person name="Mattei B."/>
            <person name="McIntosh T.C."/>
            <person name="McLeod M.P."/>
            <person name="McPherson D."/>
            <person name="Merkulov G."/>
            <person name="Milshina N.V."/>
            <person name="Mobarry C."/>
            <person name="Morris J."/>
            <person name="Moshrefi A."/>
            <person name="Mount S.M."/>
            <person name="Moy M."/>
            <person name="Murphy B."/>
            <person name="Murphy L."/>
            <person name="Muzny D.M."/>
            <person name="Nelson D.L."/>
            <person name="Nelson D.R."/>
            <person name="Nelson K.A."/>
            <person name="Nixon K."/>
            <person name="Nusskern D.R."/>
            <person name="Pacleb J.M."/>
            <person name="Palazzolo M."/>
            <person name="Pittman G.S."/>
            <person name="Pan S."/>
            <person name="Pollard J."/>
            <person name="Puri V."/>
            <person name="Reese M.G."/>
            <person name="Reinert K."/>
            <person name="Remington K."/>
            <person name="Saunders R.D.C."/>
            <person name="Scheeler F."/>
            <person name="Shen H."/>
            <person name="Shue B.C."/>
            <person name="Siden-Kiamos I."/>
            <person name="Simpson M."/>
            <person name="Skupski M.P."/>
            <person name="Smith T.J."/>
            <person name="Spier E."/>
            <person name="Spradling A.C."/>
            <person name="Stapleton M."/>
            <person name="Strong R."/>
            <person name="Sun E."/>
            <person name="Svirskas R."/>
            <person name="Tector C."/>
            <person name="Turner R."/>
            <person name="Venter E."/>
            <person name="Wang A.H."/>
            <person name="Wang X."/>
            <person name="Wang Z.-Y."/>
            <person name="Wassarman D.A."/>
            <person name="Weinstock G.M."/>
            <person name="Weissenbach J."/>
            <person name="Williams S.M."/>
            <person name="Woodage T."/>
            <person name="Worley K.C."/>
            <person name="Wu D."/>
            <person name="Yang S."/>
            <person name="Yao Q.A."/>
            <person name="Ye J."/>
            <person name="Yeh R.-F."/>
            <person name="Zaveri J.S."/>
            <person name="Zhan M."/>
            <person name="Zhang G."/>
            <person name="Zhao Q."/>
            <person name="Zheng L."/>
            <person name="Zheng X.H."/>
            <person name="Zhong F.N."/>
            <person name="Zhong W."/>
            <person name="Zhou X."/>
            <person name="Zhu S.C."/>
            <person name="Zhu X."/>
            <person name="Smith H.O."/>
            <person name="Gibbs R.A."/>
            <person name="Myers E.W."/>
            <person name="Rubin G.M."/>
            <person name="Venter J.C."/>
        </authorList>
    </citation>
    <scope>NUCLEOTIDE SEQUENCE [LARGE SCALE GENOMIC DNA]</scope>
    <source>
        <strain>Berkeley</strain>
    </source>
</reference>
<reference key="4">
    <citation type="journal article" date="2002" name="Genome Biol.">
        <title>Annotation of the Drosophila melanogaster euchromatic genome: a systematic review.</title>
        <authorList>
            <person name="Misra S."/>
            <person name="Crosby M.A."/>
            <person name="Mungall C.J."/>
            <person name="Matthews B.B."/>
            <person name="Campbell K.S."/>
            <person name="Hradecky P."/>
            <person name="Huang Y."/>
            <person name="Kaminker J.S."/>
            <person name="Millburn G.H."/>
            <person name="Prochnik S.E."/>
            <person name="Smith C.D."/>
            <person name="Tupy J.L."/>
            <person name="Whitfield E.J."/>
            <person name="Bayraktaroglu L."/>
            <person name="Berman B.P."/>
            <person name="Bettencourt B.R."/>
            <person name="Celniker S.E."/>
            <person name="de Grey A.D.N.J."/>
            <person name="Drysdale R.A."/>
            <person name="Harris N.L."/>
            <person name="Richter J."/>
            <person name="Russo S."/>
            <person name="Schroeder A.J."/>
            <person name="Shu S.Q."/>
            <person name="Stapleton M."/>
            <person name="Yamada C."/>
            <person name="Ashburner M."/>
            <person name="Gelbart W.M."/>
            <person name="Rubin G.M."/>
            <person name="Lewis S.E."/>
        </authorList>
    </citation>
    <scope>GENOME REANNOTATION</scope>
    <scope>ALTERNATIVE SPLICING</scope>
    <source>
        <strain>Berkeley</strain>
    </source>
</reference>
<reference key="5">
    <citation type="journal article" date="1997" name="Nucleic Acids Res.">
        <title>Conceptual translation of timeless reveals alternative initiating methionines in Drosophila.</title>
        <authorList>
            <person name="Rosato E."/>
            <person name="Trevisan A."/>
            <person name="Sandrelli F."/>
            <person name="Zordan M."/>
            <person name="Kyriacou C.P."/>
            <person name="Costa R."/>
        </authorList>
    </citation>
    <scope>NUCLEOTIDE SEQUENCE [GENOMIC DNA] OF 1-30</scope>
    <scope>ALTERNATIVE INITIATION</scope>
    <source>
        <strain>Canton-S</strain>
        <strain>CO-TG14</strain>
        <strain>CO-TG20</strain>
        <strain>PER+</strain>
        <strain>PER01</strain>
        <strain>PERS</strain>
    </source>
</reference>
<reference key="6">
    <citation type="journal article" date="2002" name="Genome Biol.">
        <title>A Drosophila full-length cDNA resource.</title>
        <authorList>
            <person name="Stapleton M."/>
            <person name="Carlson J.W."/>
            <person name="Brokstein P."/>
            <person name="Yu C."/>
            <person name="Champe M."/>
            <person name="George R.A."/>
            <person name="Guarin H."/>
            <person name="Kronmiller B."/>
            <person name="Pacleb J.M."/>
            <person name="Park S."/>
            <person name="Wan K.H."/>
            <person name="Rubin G.M."/>
            <person name="Celniker S.E."/>
        </authorList>
    </citation>
    <scope>NUCLEOTIDE SEQUENCE [LARGE SCALE MRNA] OF 34-1398 (ISOFORM O)</scope>
    <scope>NUCLEOTIDE SEQUENCE [LARGE SCALE MRNA] OF 1115-1398 (ISOFORMS B/L/R)</scope>
    <source>
        <strain>Berkeley</strain>
        <tissue>Head</tissue>
    </source>
</reference>
<reference key="7">
    <citation type="submission" date="2009-10" db="EMBL/GenBank/DDBJ databases">
        <authorList>
            <person name="Stapleton M."/>
            <person name="Booth B."/>
            <person name="Carlson J."/>
            <person name="Chavez C."/>
            <person name="Frise E."/>
            <person name="George R."/>
            <person name="Pacleb J."/>
            <person name="Park S."/>
            <person name="Wan K."/>
            <person name="Yu C."/>
            <person name="Celniker S."/>
        </authorList>
    </citation>
    <scope>NUCLEOTIDE SEQUENCE [LARGE SCALE MRNA] (ISOFORM N)</scope>
    <scope>NUCLEOTIDE SEQUENCE [LARGE SCALE MRNA] OF 907-1398 (ISOFORMS B/L/R)</scope>
    <source>
        <strain>Berkeley</strain>
    </source>
</reference>
<reference key="8">
    <citation type="journal article" date="1998" name="Genetics">
        <title>Conserved regions of the timeless (tim) clock gene in Drosophila analyzed through phylogenetic and functional studies.</title>
        <authorList>
            <person name="Ousley A."/>
            <person name="Zafarullah K."/>
            <person name="Chen Y."/>
            <person name="Emerson M."/>
            <person name="Hickman L."/>
            <person name="Sehgal A."/>
        </authorList>
    </citation>
    <scope>NUCLEOTIDE SEQUENCE [GENOMIC DNA] OF 220-284</scope>
    <scope>FUNCTION</scope>
    <scope>TISSUE SPECIFICITY</scope>
    <scope>DISRUPTION PHENOTYPE</scope>
</reference>
<reference key="9">
    <citation type="journal article" date="1994" name="Science">
        <title>Block in nuclear localization of period protein by a second clock mutation, timeless.</title>
        <authorList>
            <person name="Vosshall L.B."/>
            <person name="Price J.L."/>
            <person name="Sehgal A."/>
            <person name="Saez L."/>
            <person name="Young M.W."/>
        </authorList>
    </citation>
    <scope>FUNCTION</scope>
    <scope>DISRUPTION PHENOTYPE</scope>
</reference>
<reference key="10">
    <citation type="journal article" date="1995" name="Science">
        <title>Rhythmic expression of timeless: a basis for promoting circadian cycles in period gene autoregulation.</title>
        <authorList>
            <person name="Sehgal A."/>
            <person name="Rothenfluh-Hilfiker A."/>
            <person name="Hunter-Ensor M."/>
            <person name="Chen Y."/>
            <person name="Myers M.P."/>
            <person name="Young M.W."/>
        </authorList>
    </citation>
    <scope>FUNCTION</scope>
</reference>
<reference key="11">
    <citation type="journal article" date="1995" name="Science">
        <title>Isolation of timeless by PER protein interaction: defective interaction between timeless protein and long-period mutant PERL.</title>
        <authorList>
            <person name="Gekakis N."/>
            <person name="Saez L."/>
            <person name="Delahaye-Brown A.M."/>
            <person name="Myers M.P."/>
            <person name="Sehgal A."/>
            <person name="Young M.W."/>
            <person name="Weitz C.J."/>
        </authorList>
    </citation>
    <scope>FUNCTION</scope>
    <scope>INTERACTION WITH PER</scope>
</reference>
<reference key="12">
    <citation type="journal article" date="1996" name="Cell">
        <title>Regulation of the Drosophila protein timeless suggests a mechanism for resetting the circadian clock by light.</title>
        <authorList>
            <person name="Hunter-Ensor M."/>
            <person name="Ousley A."/>
            <person name="Sehgal A."/>
        </authorList>
    </citation>
    <scope>FUNCTION</scope>
    <scope>TISSUE SPECIFICITY</scope>
    <scope>SUBCELLULAR LOCATION</scope>
</reference>
<comment type="function">
    <text evidence="3 4 5 6 7">Required for the production of circadian rhythms. The biological cycle depends on the rhythmic formation and nuclear localization of the TIM-PER complex. Light induces the degradation of TIM, which promotes elimination of PER. Nuclear activity of the heterodimer coordinatively regulates PER and TIM transcription through a negative feedback loop. Behaves as a negative element in circadian transcriptional loop. Does not appear to bind DNA, suggesting indirect transcriptional inhibition.</text>
</comment>
<comment type="subunit">
    <text>Forms a heterodimer with period (PER); the complex then translocates into the nucleus.</text>
</comment>
<comment type="interaction">
    <interactant intactId="EBI-266295">
        <id>P49021</id>
    </interactant>
    <interactant intactId="EBI-15718452">
        <id>P07663-1</id>
        <label>per</label>
    </interactant>
    <organismsDiffer>false</organismsDiffer>
    <experiments>2</experiments>
</comment>
<comment type="subcellular location">
    <subcellularLocation>
        <location evidence="6">Nucleus</location>
    </subcellularLocation>
    <subcellularLocation>
        <location evidence="6">Cytoplasm</location>
        <location evidence="6">Perinuclear region</location>
    </subcellularLocation>
    <text evidence="6">Nuclear at specific periods of the day. First accumulates in the perinuclear region about one hour before translocation into the nucleus. Interaction with per is required for nuclear localization.</text>
</comment>
<comment type="alternative products">
    <event type="alternative splicing"/>
    <event type="alternative initiation"/>
    <isoform>
        <id>P49021-4</id>
        <name evidence="12">B</name>
        <name evidence="12">P</name>
        <sequence type="displayed"/>
    </isoform>
    <isoform>
        <id>P49021-2</id>
        <name evidence="12">R</name>
        <sequence type="described" ref="VSP_004457"/>
    </isoform>
    <isoform>
        <id>P49021-3</id>
        <name evidence="12">O</name>
        <sequence type="described" ref="VSP_007693 VSP_007694"/>
    </isoform>
    <isoform>
        <id>P49021-5</id>
        <name evidence="12">N</name>
        <sequence type="described" ref="VSP_054859 VSP_007693 VSP_007694"/>
    </isoform>
    <isoform>
        <id>P49021-6</id>
        <name evidence="12">S</name>
        <sequence type="described" ref="VSP_004457 VSP_054860 VSP_054861"/>
    </isoform>
    <isoform>
        <id>P49021-7</id>
        <name evidence="12">M</name>
        <sequence type="described" ref="VSP_054860 VSP_054861"/>
    </isoform>
    <isoform>
        <id>P49021-8</id>
        <name evidence="12">L</name>
        <sequence type="described" ref="VSP_054859"/>
    </isoform>
</comment>
<comment type="tissue specificity">
    <text evidence="6 7">Expressed in head, photoreceptors, lateral neurons and glial cells in the lamina and medulla of the optic lobes. Expression follows a light-dark cycle, levels show a significant decrease at the end of the night and then remain low throughout the light period (at protein level).</text>
</comment>
<comment type="PTM">
    <text>Phosphorylated with a circadian rhythmicity.</text>
</comment>
<comment type="disruption phenotype">
    <text evidence="5 7">Mutant flies show loss of both behavioral circadian rhythms and molecular oscillations of per RNA and protein.</text>
</comment>
<comment type="similarity">
    <text evidence="11">Belongs to the timeless family.</text>
</comment>
<comment type="sequence caution" evidence="11">
    <conflict type="erroneous initiation">
        <sequence resource="EMBL-CDS" id="AAC46920"/>
    </conflict>
    <text>Extended N-terminus.</text>
</comment>
<comment type="sequence caution" evidence="11">
    <conflict type="erroneous initiation">
        <sequence resource="EMBL-CDS" id="AAL13507"/>
    </conflict>
    <text>Truncated N-terminus.</text>
</comment>
<comment type="sequence caution" evidence="11">
    <conflict type="erroneous initiation">
        <sequence resource="EMBL-CDS" id="AAN71179"/>
    </conflict>
    <text>Truncated N-terminus.</text>
</comment>
<comment type="sequence caution" evidence="11">
    <conflict type="miscellaneous discrepancy">
        <sequence resource="EMBL-CDS" id="AAN71179"/>
    </conflict>
    <text>Intron retention.</text>
</comment>
<comment type="sequence caution" evidence="11">
    <conflict type="erroneous initiation">
        <sequence resource="EMBL-CDS" id="ACX54883"/>
    </conflict>
    <text>Extended N-terminus.</text>
</comment>
<proteinExistence type="evidence at protein level"/>
<evidence type="ECO:0000255" key="1"/>
<evidence type="ECO:0000256" key="2">
    <source>
        <dbReference type="SAM" id="MobiDB-lite"/>
    </source>
</evidence>
<evidence type="ECO:0000269" key="3">
    <source>
    </source>
</evidence>
<evidence type="ECO:0000269" key="4">
    <source>
    </source>
</evidence>
<evidence type="ECO:0000269" key="5">
    <source>
    </source>
</evidence>
<evidence type="ECO:0000269" key="6">
    <source>
    </source>
</evidence>
<evidence type="ECO:0000269" key="7">
    <source>
    </source>
</evidence>
<evidence type="ECO:0000303" key="8">
    <source>
    </source>
</evidence>
<evidence type="ECO:0000303" key="9">
    <source>
    </source>
</evidence>
<evidence type="ECO:0000303" key="10">
    <source ref="7"/>
</evidence>
<evidence type="ECO:0000305" key="11"/>
<evidence type="ECO:0000312" key="12">
    <source>
        <dbReference type="FlyBase" id="FBgn0014396"/>
    </source>
</evidence>
<evidence type="ECO:0007829" key="13">
    <source>
        <dbReference type="PDB" id="8DD7"/>
    </source>
</evidence>